<sequence length="330" mass="36148">MKDKAYDITIIGGGPIGLFAAFYAGLRGVTVKIIESLSELGGQPAILYPEKMIYDIPAYPSLTGVELTENLIKQLSRFEDRTTICLKEEVLTFDKVKGGFSIRTNKAEHFSKAIIIACGNGAFAPRTLGLESEENFADHNLFYNVHQLDQFAGQKVVICGGGDSAVDWALALEDIAESVTVVHRRDAFRAHEHSVELLKTSTVNLLTPYVPKALKGIGNLAEKLVIQKVKEDEVLELELDSLIVSFGFSTSNKNLKNWNLDYKRSSITVSPLFQTSQEGIFAIGDAAAYNGKVDLIATGFGEAPTAVNQAINYIYPDRDNRVVHSTSLID</sequence>
<organism>
    <name type="scientific">Streptococcus pyogenes serotype M12 (strain MGAS2096)</name>
    <dbReference type="NCBI Taxonomy" id="370553"/>
    <lineage>
        <taxon>Bacteria</taxon>
        <taxon>Bacillati</taxon>
        <taxon>Bacillota</taxon>
        <taxon>Bacilli</taxon>
        <taxon>Lactobacillales</taxon>
        <taxon>Streptococcaceae</taxon>
        <taxon>Streptococcus</taxon>
    </lineage>
</organism>
<evidence type="ECO:0000255" key="1">
    <source>
        <dbReference type="HAMAP-Rule" id="MF_01685"/>
    </source>
</evidence>
<comment type="catalytic activity">
    <reaction evidence="1">
        <text>2 reduced [2Fe-2S]-[ferredoxin] + NADP(+) + H(+) = 2 oxidized [2Fe-2S]-[ferredoxin] + NADPH</text>
        <dbReference type="Rhea" id="RHEA:20125"/>
        <dbReference type="Rhea" id="RHEA-COMP:10000"/>
        <dbReference type="Rhea" id="RHEA-COMP:10001"/>
        <dbReference type="ChEBI" id="CHEBI:15378"/>
        <dbReference type="ChEBI" id="CHEBI:33737"/>
        <dbReference type="ChEBI" id="CHEBI:33738"/>
        <dbReference type="ChEBI" id="CHEBI:57783"/>
        <dbReference type="ChEBI" id="CHEBI:58349"/>
        <dbReference type="EC" id="1.18.1.2"/>
    </reaction>
</comment>
<comment type="cofactor">
    <cofactor evidence="1">
        <name>FAD</name>
        <dbReference type="ChEBI" id="CHEBI:57692"/>
    </cofactor>
    <text evidence="1">Binds 1 FAD per subunit.</text>
</comment>
<comment type="subunit">
    <text evidence="1">Homodimer.</text>
</comment>
<comment type="similarity">
    <text evidence="1">Belongs to the ferredoxin--NADP reductase type 2 family.</text>
</comment>
<name>FENR_STRPB</name>
<feature type="chain" id="PRO_0000364963" description="Ferredoxin--NADP reductase">
    <location>
        <begin position="1"/>
        <end position="330"/>
    </location>
</feature>
<feature type="binding site" evidence="1">
    <location>
        <position position="35"/>
    </location>
    <ligand>
        <name>FAD</name>
        <dbReference type="ChEBI" id="CHEBI:57692"/>
    </ligand>
</feature>
<feature type="binding site" evidence="1">
    <location>
        <position position="43"/>
    </location>
    <ligand>
        <name>FAD</name>
        <dbReference type="ChEBI" id="CHEBI:57692"/>
    </ligand>
</feature>
<feature type="binding site" evidence="1">
    <location>
        <position position="48"/>
    </location>
    <ligand>
        <name>FAD</name>
        <dbReference type="ChEBI" id="CHEBI:57692"/>
    </ligand>
</feature>
<feature type="binding site" evidence="1">
    <location>
        <position position="90"/>
    </location>
    <ligand>
        <name>FAD</name>
        <dbReference type="ChEBI" id="CHEBI:57692"/>
    </ligand>
</feature>
<feature type="binding site" evidence="1">
    <location>
        <position position="123"/>
    </location>
    <ligand>
        <name>FAD</name>
        <dbReference type="ChEBI" id="CHEBI:57692"/>
    </ligand>
</feature>
<feature type="binding site" evidence="1">
    <location>
        <position position="285"/>
    </location>
    <ligand>
        <name>FAD</name>
        <dbReference type="ChEBI" id="CHEBI:57692"/>
    </ligand>
</feature>
<feature type="binding site" evidence="1">
    <location>
        <position position="326"/>
    </location>
    <ligand>
        <name>FAD</name>
        <dbReference type="ChEBI" id="CHEBI:57692"/>
    </ligand>
</feature>
<gene>
    <name type="ordered locus">MGAS2096_Spy0727</name>
</gene>
<accession>Q1JCC9</accession>
<dbReference type="EC" id="1.18.1.2" evidence="1"/>
<dbReference type="EMBL" id="CP000261">
    <property type="protein sequence ID" value="ABF35779.1"/>
    <property type="molecule type" value="Genomic_DNA"/>
</dbReference>
<dbReference type="SMR" id="Q1JCC9"/>
<dbReference type="KEGG" id="spj:MGAS2096_Spy0727"/>
<dbReference type="HOGENOM" id="CLU_031864_5_5_9"/>
<dbReference type="GO" id="GO:0004324">
    <property type="term" value="F:ferredoxin-NADP+ reductase activity"/>
    <property type="evidence" value="ECO:0007669"/>
    <property type="project" value="UniProtKB-UniRule"/>
</dbReference>
<dbReference type="GO" id="GO:0050660">
    <property type="term" value="F:flavin adenine dinucleotide binding"/>
    <property type="evidence" value="ECO:0007669"/>
    <property type="project" value="UniProtKB-UniRule"/>
</dbReference>
<dbReference type="GO" id="GO:0050661">
    <property type="term" value="F:NADP binding"/>
    <property type="evidence" value="ECO:0007669"/>
    <property type="project" value="UniProtKB-UniRule"/>
</dbReference>
<dbReference type="Gene3D" id="3.50.50.60">
    <property type="entry name" value="FAD/NAD(P)-binding domain"/>
    <property type="match status" value="2"/>
</dbReference>
<dbReference type="HAMAP" id="MF_01685">
    <property type="entry name" value="FENR2"/>
    <property type="match status" value="1"/>
</dbReference>
<dbReference type="InterPro" id="IPR036188">
    <property type="entry name" value="FAD/NAD-bd_sf"/>
</dbReference>
<dbReference type="InterPro" id="IPR023753">
    <property type="entry name" value="FAD/NAD-binding_dom"/>
</dbReference>
<dbReference type="InterPro" id="IPR022890">
    <property type="entry name" value="Fd--NADP_Rdtase_type_2"/>
</dbReference>
<dbReference type="InterPro" id="IPR050097">
    <property type="entry name" value="Ferredoxin-NADP_redctase_2"/>
</dbReference>
<dbReference type="PANTHER" id="PTHR48105">
    <property type="entry name" value="THIOREDOXIN REDUCTASE 1-RELATED-RELATED"/>
    <property type="match status" value="1"/>
</dbReference>
<dbReference type="Pfam" id="PF07992">
    <property type="entry name" value="Pyr_redox_2"/>
    <property type="match status" value="1"/>
</dbReference>
<dbReference type="PRINTS" id="PR00368">
    <property type="entry name" value="FADPNR"/>
</dbReference>
<dbReference type="PRINTS" id="PR00469">
    <property type="entry name" value="PNDRDTASEII"/>
</dbReference>
<dbReference type="SUPFAM" id="SSF51905">
    <property type="entry name" value="FAD/NAD(P)-binding domain"/>
    <property type="match status" value="1"/>
</dbReference>
<keyword id="KW-0274">FAD</keyword>
<keyword id="KW-0285">Flavoprotein</keyword>
<keyword id="KW-0521">NADP</keyword>
<keyword id="KW-0560">Oxidoreductase</keyword>
<protein>
    <recommendedName>
        <fullName evidence="1">Ferredoxin--NADP reductase</fullName>
        <shortName evidence="1">FNR</shortName>
        <shortName evidence="1">Fd-NADP(+) reductase</shortName>
        <ecNumber evidence="1">1.18.1.2</ecNumber>
    </recommendedName>
</protein>
<proteinExistence type="inferred from homology"/>
<reference key="1">
    <citation type="journal article" date="2006" name="Proc. Natl. Acad. Sci. U.S.A.">
        <title>Molecular genetic anatomy of inter- and intraserotype variation in the human bacterial pathogen group A Streptococcus.</title>
        <authorList>
            <person name="Beres S.B."/>
            <person name="Richter E.W."/>
            <person name="Nagiec M.J."/>
            <person name="Sumby P."/>
            <person name="Porcella S.F."/>
            <person name="DeLeo F.R."/>
            <person name="Musser J.M."/>
        </authorList>
    </citation>
    <scope>NUCLEOTIDE SEQUENCE [LARGE SCALE GENOMIC DNA]</scope>
    <source>
        <strain>MGAS2096</strain>
    </source>
</reference>